<dbReference type="EC" id="4.6.1.2" evidence="1"/>
<dbReference type="EMBL" id="AF024622">
    <property type="protein sequence ID" value="AAC01752.1"/>
    <property type="molecule type" value="mRNA"/>
</dbReference>
<dbReference type="EMBL" id="U33847">
    <property type="protein sequence ID" value="AAC52417.1"/>
    <property type="molecule type" value="mRNA"/>
</dbReference>
<dbReference type="PIR" id="T42260">
    <property type="entry name" value="T42260"/>
</dbReference>
<dbReference type="SMR" id="P55205"/>
<dbReference type="FunCoup" id="P55205">
    <property type="interactions" value="1"/>
</dbReference>
<dbReference type="STRING" id="10116.ENSRNOP00000021744"/>
<dbReference type="GlyCosmos" id="P55205">
    <property type="glycosylation" value="5 sites, No reported glycans"/>
</dbReference>
<dbReference type="GlyGen" id="P55205">
    <property type="glycosylation" value="5 sites"/>
</dbReference>
<dbReference type="PhosphoSitePlus" id="P55205"/>
<dbReference type="PaxDb" id="10116-ENSRNOP00000021744"/>
<dbReference type="UCSC" id="RGD:621853">
    <molecule id="P55205-1"/>
    <property type="organism name" value="rat"/>
</dbReference>
<dbReference type="AGR" id="RGD:621853"/>
<dbReference type="RGD" id="621853">
    <property type="gene designation" value="Gucy2g"/>
</dbReference>
<dbReference type="eggNOG" id="KOG1023">
    <property type="taxonomic scope" value="Eukaryota"/>
</dbReference>
<dbReference type="InParanoid" id="P55205"/>
<dbReference type="PhylomeDB" id="P55205"/>
<dbReference type="PRO" id="PR:P55205"/>
<dbReference type="Proteomes" id="UP000002494">
    <property type="component" value="Unplaced"/>
</dbReference>
<dbReference type="GO" id="GO:0005737">
    <property type="term" value="C:cytoplasm"/>
    <property type="evidence" value="ECO:0007669"/>
    <property type="project" value="UniProtKB-SubCell"/>
</dbReference>
<dbReference type="GO" id="GO:0005886">
    <property type="term" value="C:plasma membrane"/>
    <property type="evidence" value="ECO:0000318"/>
    <property type="project" value="GO_Central"/>
</dbReference>
<dbReference type="GO" id="GO:0005524">
    <property type="term" value="F:ATP binding"/>
    <property type="evidence" value="ECO:0007669"/>
    <property type="project" value="InterPro"/>
</dbReference>
<dbReference type="GO" id="GO:0005525">
    <property type="term" value="F:GTP binding"/>
    <property type="evidence" value="ECO:0007669"/>
    <property type="project" value="UniProtKB-KW"/>
</dbReference>
<dbReference type="GO" id="GO:0004383">
    <property type="term" value="F:guanylate cyclase activity"/>
    <property type="evidence" value="ECO:0000318"/>
    <property type="project" value="GO_Central"/>
</dbReference>
<dbReference type="GO" id="GO:0001653">
    <property type="term" value="F:peptide receptor activity"/>
    <property type="evidence" value="ECO:0000318"/>
    <property type="project" value="GO_Central"/>
</dbReference>
<dbReference type="GO" id="GO:0004672">
    <property type="term" value="F:protein kinase activity"/>
    <property type="evidence" value="ECO:0007669"/>
    <property type="project" value="InterPro"/>
</dbReference>
<dbReference type="GO" id="GO:0006182">
    <property type="term" value="P:cGMP biosynthetic process"/>
    <property type="evidence" value="ECO:0000318"/>
    <property type="project" value="GO_Central"/>
</dbReference>
<dbReference type="GO" id="GO:0035556">
    <property type="term" value="P:intracellular signal transduction"/>
    <property type="evidence" value="ECO:0007669"/>
    <property type="project" value="InterPro"/>
</dbReference>
<dbReference type="GO" id="GO:0007168">
    <property type="term" value="P:receptor guanylyl cyclase signaling pathway"/>
    <property type="evidence" value="ECO:0000318"/>
    <property type="project" value="GO_Central"/>
</dbReference>
<dbReference type="CDD" id="cd07302">
    <property type="entry name" value="CHD"/>
    <property type="match status" value="1"/>
</dbReference>
<dbReference type="CDD" id="cd06372">
    <property type="entry name" value="PBP1_GC_G-like"/>
    <property type="match status" value="1"/>
</dbReference>
<dbReference type="CDD" id="cd13992">
    <property type="entry name" value="PK_GC"/>
    <property type="match status" value="1"/>
</dbReference>
<dbReference type="FunFam" id="1.10.510.10:FF:001507">
    <property type="entry name" value="Guanylate cyclase"/>
    <property type="match status" value="1"/>
</dbReference>
<dbReference type="FunFam" id="3.30.70.1230:FF:000004">
    <property type="entry name" value="Guanylate cyclase"/>
    <property type="match status" value="1"/>
</dbReference>
<dbReference type="FunFam" id="3.40.50.2300:FF:000749">
    <property type="entry name" value="Guanylate cyclase 2G"/>
    <property type="match status" value="1"/>
</dbReference>
<dbReference type="Gene3D" id="3.40.50.2300">
    <property type="match status" value="3"/>
</dbReference>
<dbReference type="Gene3D" id="6.10.250.780">
    <property type="match status" value="1"/>
</dbReference>
<dbReference type="Gene3D" id="3.30.70.1230">
    <property type="entry name" value="Nucleotide cyclase"/>
    <property type="match status" value="1"/>
</dbReference>
<dbReference type="Gene3D" id="1.10.510.10">
    <property type="entry name" value="Transferase(Phosphotransferase) domain 1"/>
    <property type="match status" value="1"/>
</dbReference>
<dbReference type="InterPro" id="IPR001054">
    <property type="entry name" value="A/G_cyclase"/>
</dbReference>
<dbReference type="InterPro" id="IPR018297">
    <property type="entry name" value="A/G_cyclase_CS"/>
</dbReference>
<dbReference type="InterPro" id="IPR001828">
    <property type="entry name" value="ANF_lig-bd_rcpt"/>
</dbReference>
<dbReference type="InterPro" id="IPR001170">
    <property type="entry name" value="ANPR/GUC"/>
</dbReference>
<dbReference type="InterPro" id="IPR050401">
    <property type="entry name" value="Cyclic_nucleotide_synthase"/>
</dbReference>
<dbReference type="InterPro" id="IPR011009">
    <property type="entry name" value="Kinase-like_dom_sf"/>
</dbReference>
<dbReference type="InterPro" id="IPR029787">
    <property type="entry name" value="Nucleotide_cyclase"/>
</dbReference>
<dbReference type="InterPro" id="IPR028082">
    <property type="entry name" value="Peripla_BP_I"/>
</dbReference>
<dbReference type="InterPro" id="IPR000719">
    <property type="entry name" value="Prot_kinase_dom"/>
</dbReference>
<dbReference type="InterPro" id="IPR001245">
    <property type="entry name" value="Ser-Thr/Tyr_kinase_cat_dom"/>
</dbReference>
<dbReference type="PANTHER" id="PTHR11920:SF500">
    <property type="entry name" value="GUANYLATE CYCLASE 2G"/>
    <property type="match status" value="1"/>
</dbReference>
<dbReference type="PANTHER" id="PTHR11920">
    <property type="entry name" value="GUANYLYL CYCLASE"/>
    <property type="match status" value="1"/>
</dbReference>
<dbReference type="Pfam" id="PF01094">
    <property type="entry name" value="ANF_receptor"/>
    <property type="match status" value="1"/>
</dbReference>
<dbReference type="Pfam" id="PF00211">
    <property type="entry name" value="Guanylate_cyc"/>
    <property type="match status" value="1"/>
</dbReference>
<dbReference type="Pfam" id="PF07714">
    <property type="entry name" value="PK_Tyr_Ser-Thr"/>
    <property type="match status" value="1"/>
</dbReference>
<dbReference type="PRINTS" id="PR00255">
    <property type="entry name" value="NATPEPTIDER"/>
</dbReference>
<dbReference type="SMART" id="SM00044">
    <property type="entry name" value="CYCc"/>
    <property type="match status" value="1"/>
</dbReference>
<dbReference type="SUPFAM" id="SSF55073">
    <property type="entry name" value="Nucleotide cyclase"/>
    <property type="match status" value="1"/>
</dbReference>
<dbReference type="SUPFAM" id="SSF53822">
    <property type="entry name" value="Periplasmic binding protein-like I"/>
    <property type="match status" value="1"/>
</dbReference>
<dbReference type="SUPFAM" id="SSF56112">
    <property type="entry name" value="Protein kinase-like (PK-like)"/>
    <property type="match status" value="1"/>
</dbReference>
<dbReference type="PROSITE" id="PS00452">
    <property type="entry name" value="GUANYLATE_CYCLASE_1"/>
    <property type="match status" value="1"/>
</dbReference>
<dbReference type="PROSITE" id="PS50125">
    <property type="entry name" value="GUANYLATE_CYCLASE_2"/>
    <property type="match status" value="1"/>
</dbReference>
<dbReference type="PROSITE" id="PS50011">
    <property type="entry name" value="PROTEIN_KINASE_DOM"/>
    <property type="match status" value="1"/>
</dbReference>
<evidence type="ECO:0000250" key="1">
    <source>
        <dbReference type="UniProtKB" id="Q6TL19"/>
    </source>
</evidence>
<evidence type="ECO:0000255" key="2"/>
<evidence type="ECO:0000255" key="3">
    <source>
        <dbReference type="PROSITE-ProRule" id="PRU00099"/>
    </source>
</evidence>
<evidence type="ECO:0000255" key="4">
    <source>
        <dbReference type="PROSITE-ProRule" id="PRU00159"/>
    </source>
</evidence>
<evidence type="ECO:0000269" key="5">
    <source>
    </source>
</evidence>
<evidence type="ECO:0000303" key="6">
    <source>
    </source>
</evidence>
<evidence type="ECO:0000305" key="7"/>
<name>GUC2G_RAT</name>
<keyword id="KW-0025">Alternative splicing</keyword>
<keyword id="KW-1003">Cell membrane</keyword>
<keyword id="KW-0141">cGMP biosynthesis</keyword>
<keyword id="KW-0963">Cytoplasm</keyword>
<keyword id="KW-0325">Glycoprotein</keyword>
<keyword id="KW-0342">GTP-binding</keyword>
<keyword id="KW-0456">Lyase</keyword>
<keyword id="KW-0472">Membrane</keyword>
<keyword id="KW-0547">Nucleotide-binding</keyword>
<keyword id="KW-0675">Receptor</keyword>
<keyword id="KW-1185">Reference proteome</keyword>
<keyword id="KW-0732">Signal</keyword>
<keyword id="KW-0812">Transmembrane</keyword>
<keyword id="KW-1133">Transmembrane helix</keyword>
<sequence>MASRARSEPPLEHRFYGGAESHAGHSSLVLTLFVVMLMTCLEAAKLTVGFHAPWNISHPFSVQRLGAGLQIAVDKLNSEPVGPGNLSWEFTYTNATCNAKESLAAFIDQVQREHISVLIGPACPEAAEVIGLLASEWDIPLFDFVGQMTALEDHFWCDTCVTLVPPKQEIGTVLRESLQYLGWEYIGVFGGSSAGSSWGEVNELWKAVEDELQLHFTITARVRYSSGHSDLLQEGLRSMSSVARVIILICSSEDAKHILQAAEDLGLNSGEFVFLLLQQLEDSFWKEVLAEDKVTRFPKVYESVFLIAPSTYGGSAGDDDFRKQVYQRLRRPPFQSSISSEDQVSPYSAYLHDALLLYAQTVEEMMKAEKDFRDGRQLISTLRADQVTLQGITGPVLLDAQGKRHMDYSVYALQKSGNGSRFLPFLHYDSFQKVIRPWRDDLNASGPHGSHPEYKPDCGFHEDLCRTKPPTGAGMTASVTAVIPTVTLLVVASAAAITGLMLWRLRGKVQNHPGDTWWQIHYDSITLLPQHKPSHRGTPMSRCNVSNASTVKISADCGSFAKTHQDEELFYAPVGLYQGNHVALCYIGEEAEARIKKPTVLREVWLMCELKHENIVPFFGVCTEPPNICIVTQYCKKGSLKDVLRNSDHEMDWIFKLSFVYDIVNGMLFLHGSPLRSHGNLKPSNCLVDSHMQLKLAGFGLWEFKHGSTCRIYNQEATDHSELYWTAPELLRLRELPWSGTPQGDVYSFAILLRDLIHQQAHGPFEDLEAAPEEIISCIKDPRAPVPLRPSLLEDKGDERIVALVRACWAESPEQRPAFPSIKKTLREASPRGRVSILDSMMGKLEMYASHLEEVVEERTCQLVAEKRKVEKLLSTMLPSFVGEQLIAGKSVEPEHFESVTIFFSDIVGFTKLCSLSSPLQVVKLLNDLYSLFDHTIQTHDVYKVETIGDAYMVASGLPIRNGAQHADEIATMSLHLLSVTTNFQIGHMPEERLKLRIGLHTGPVVAGVVGITMPRYCLFGDTVNMASRMESSSLPLRIHVSQSTARALLVAGGYHLQKRGTISVKGKGEQTTFWLTGKDGFAVPLPEFTEEEAKVPEIL</sequence>
<proteinExistence type="evidence at transcript level"/>
<protein>
    <recommendedName>
        <fullName>Guanylate cyclase 2G</fullName>
        <ecNumber evidence="1">4.6.1.2</ecNumber>
    </recommendedName>
    <alternativeName>
        <fullName>Guanylyl cyclase receptor G</fullName>
        <shortName>GC-G</shortName>
    </alternativeName>
    <alternativeName>
        <fullName>Kinase-like domain-containing soluble guanylyl cyclase</fullName>
        <shortName>ksGC</shortName>
    </alternativeName>
</protein>
<comment type="catalytic activity">
    <reaction evidence="1">
        <text>GTP = 3',5'-cyclic GMP + diphosphate</text>
        <dbReference type="Rhea" id="RHEA:13665"/>
        <dbReference type="ChEBI" id="CHEBI:33019"/>
        <dbReference type="ChEBI" id="CHEBI:37565"/>
        <dbReference type="ChEBI" id="CHEBI:57746"/>
        <dbReference type="EC" id="4.6.1.2"/>
    </reaction>
    <physiologicalReaction direction="left-to-right" evidence="1">
        <dbReference type="Rhea" id="RHEA:13666"/>
    </physiologicalReaction>
</comment>
<comment type="subunit">
    <text evidence="1">Homooligomer (By similarity). May interact with NPR1/GC-A (By similarity).</text>
</comment>
<comment type="subcellular location">
    <molecule>Isoform 1</molecule>
    <subcellularLocation>
        <location evidence="1">Cell membrane</location>
        <topology evidence="7">Single-pass type I membrane protein</topology>
    </subcellularLocation>
</comment>
<comment type="subcellular location">
    <molecule>Isoform 2</molecule>
    <subcellularLocation>
        <location evidence="7">Cytoplasm</location>
    </subcellularLocation>
</comment>
<comment type="alternative products">
    <event type="alternative splicing"/>
    <isoform>
        <id>P55205-1</id>
        <name>1</name>
        <sequence type="displayed"/>
    </isoform>
    <isoform>
        <id>P55205-2</id>
        <name>2</name>
        <sequence type="described" ref="VSP_015787"/>
    </isoform>
</comment>
<comment type="tissue specificity">
    <text evidence="5">Expressed in lung, kidney and skeletal muscle. Low levels in intestine.</text>
</comment>
<comment type="PTM">
    <text evidence="1">N-glycosylated.</text>
</comment>
<comment type="similarity">
    <text evidence="3">Belongs to the adenylyl cyclase class-4/guanylyl cyclase family.</text>
</comment>
<accession>P55205</accession>
<accession>O54884</accession>
<feature type="signal peptide" evidence="2">
    <location>
        <begin position="1"/>
        <end position="43"/>
    </location>
</feature>
<feature type="chain" id="PRO_0000042179" description="Guanylate cyclase 2G">
    <location>
        <begin position="44"/>
        <end position="1100"/>
    </location>
</feature>
<feature type="topological domain" description="Extracellular" evidence="2">
    <location>
        <begin position="44"/>
        <end position="481"/>
    </location>
</feature>
<feature type="transmembrane region" description="Helical" evidence="2">
    <location>
        <begin position="482"/>
        <end position="502"/>
    </location>
</feature>
<feature type="topological domain" description="Cytoplasmic" evidence="2">
    <location>
        <begin position="503"/>
        <end position="1100"/>
    </location>
</feature>
<feature type="domain" description="Protein kinase" evidence="4">
    <location>
        <begin position="549"/>
        <end position="826"/>
    </location>
</feature>
<feature type="domain" description="Guanylate cyclase" evidence="3">
    <location>
        <begin position="901"/>
        <end position="1031"/>
    </location>
</feature>
<feature type="glycosylation site" description="N-linked (GlcNAc...) asparagine" evidence="2">
    <location>
        <position position="55"/>
    </location>
</feature>
<feature type="glycosylation site" description="N-linked (GlcNAc...) asparagine" evidence="2">
    <location>
        <position position="85"/>
    </location>
</feature>
<feature type="glycosylation site" description="N-linked (GlcNAc...) asparagine" evidence="2">
    <location>
        <position position="94"/>
    </location>
</feature>
<feature type="glycosylation site" description="N-linked (GlcNAc...) asparagine" evidence="2">
    <location>
        <position position="418"/>
    </location>
</feature>
<feature type="glycosylation site" description="N-linked (GlcNAc...) asparagine" evidence="2">
    <location>
        <position position="443"/>
    </location>
</feature>
<feature type="splice variant" id="VSP_015787" description="In isoform 2." evidence="6">
    <location>
        <begin position="1"/>
        <end position="666"/>
    </location>
</feature>
<feature type="sequence conflict" description="In Ref. 1; AAC52417." evidence="7" ref="1">
    <original>WSGTPQG</original>
    <variation>GPAPRR</variation>
    <location>
        <begin position="738"/>
        <end position="744"/>
    </location>
</feature>
<feature type="sequence conflict" description="In Ref. 1; AAC52417." evidence="7" ref="1">
    <original>P</original>
    <variation>S</variation>
    <location>
        <position position="782"/>
    </location>
</feature>
<feature type="sequence conflict" description="In Ref. 1; AAC52417." evidence="7" ref="1">
    <original>V</original>
    <variation>F</variation>
    <location>
        <position position="786"/>
    </location>
</feature>
<organism>
    <name type="scientific">Rattus norvegicus</name>
    <name type="common">Rat</name>
    <dbReference type="NCBI Taxonomy" id="10116"/>
    <lineage>
        <taxon>Eukaryota</taxon>
        <taxon>Metazoa</taxon>
        <taxon>Chordata</taxon>
        <taxon>Craniata</taxon>
        <taxon>Vertebrata</taxon>
        <taxon>Euteleostomi</taxon>
        <taxon>Mammalia</taxon>
        <taxon>Eutheria</taxon>
        <taxon>Euarchontoglires</taxon>
        <taxon>Glires</taxon>
        <taxon>Rodentia</taxon>
        <taxon>Myomorpha</taxon>
        <taxon>Muroidea</taxon>
        <taxon>Muridae</taxon>
        <taxon>Murinae</taxon>
        <taxon>Rattus</taxon>
    </lineage>
</organism>
<gene>
    <name type="primary">Gucy2g</name>
    <name type="synonym">Ksgc</name>
</gene>
<reference key="1">
    <citation type="journal article" date="1995" name="Biochem. Biophys. Res. Commun.">
        <title>A new type soluble guanylyl cyclase, which contains a kinase-like domain: its structure and expression.</title>
        <authorList>
            <person name="Kojima M."/>
            <person name="Hisaki K."/>
            <person name="Matsuo H."/>
            <person name="Kangawa K."/>
        </authorList>
    </citation>
    <scope>NUCLEOTIDE SEQUENCE [MRNA] (ISOFORM 1)</scope>
    <scope>TISSUE SPECIFICITY</scope>
    <source>
        <strain>Sprague-Dawley</strain>
        <tissue>Kidney</tissue>
    </source>
</reference>
<reference key="2">
    <citation type="journal article" date="1998" name="J. Biol. Chem.">
        <title>The cloning and expression of a new guanylyl cyclase orphan receptor.</title>
        <authorList>
            <person name="Schulz S."/>
            <person name="Wedel B.J."/>
            <person name="Matthews A."/>
            <person name="Garbers D.L."/>
        </authorList>
    </citation>
    <scope>NUCLEOTIDE SEQUENCE [MRNA] (ISOFORM 2)</scope>
</reference>